<accession>Q8BWY9</accession>
<accession>B2RQ25</accession>
<accession>Q69ZH6</accession>
<accession>Q7TPZ7</accession>
<feature type="chain" id="PRO_0000287142" description="Protein CIP2A">
    <location>
        <begin position="1"/>
        <end position="907"/>
    </location>
</feature>
<feature type="region of interest" description="Required for interaction with PPP2R5C" evidence="1">
    <location>
        <begin position="161"/>
        <end position="247"/>
    </location>
</feature>
<feature type="region of interest" description="Required for homodimerization" evidence="1">
    <location>
        <begin position="389"/>
        <end position="559"/>
    </location>
</feature>
<feature type="coiled-coil region" evidence="2">
    <location>
        <begin position="639"/>
        <end position="887"/>
    </location>
</feature>
<feature type="short sequence motif" description="Nuclear export signal" evidence="1">
    <location>
        <begin position="600"/>
        <end position="614"/>
    </location>
</feature>
<feature type="modified residue" description="N-acetylmethionine" evidence="1">
    <location>
        <position position="1"/>
    </location>
</feature>
<feature type="modified residue" description="Phosphoserine" evidence="1">
    <location>
        <position position="906"/>
    </location>
</feature>
<feature type="sequence conflict" description="In Ref. 1; BAC33705." evidence="6" ref="1">
    <original>S</original>
    <variation>R</variation>
    <location>
        <position position="216"/>
    </location>
</feature>
<feature type="sequence conflict" description="In Ref. 2; AAH52662." evidence="6" ref="2">
    <original>KCE</original>
    <variation>EVI</variation>
    <location>
        <begin position="413"/>
        <end position="415"/>
    </location>
</feature>
<feature type="sequence conflict" description="In Ref. 1; BAC33705." evidence="6" ref="1">
    <original>Q</original>
    <variation>K</variation>
    <location>
        <position position="699"/>
    </location>
</feature>
<keyword id="KW-0007">Acetylation</keyword>
<keyword id="KW-0158">Chromosome</keyword>
<keyword id="KW-0175">Coiled coil</keyword>
<keyword id="KW-0963">Cytoplasm</keyword>
<keyword id="KW-0227">DNA damage</keyword>
<keyword id="KW-0597">Phosphoprotein</keyword>
<keyword id="KW-1185">Reference proteome</keyword>
<protein>
    <recommendedName>
        <fullName>Protein CIP2A</fullName>
    </recommendedName>
    <alternativeName>
        <fullName>Cancerous inhibitor of PP2A</fullName>
    </alternativeName>
    <alternativeName>
        <fullName>p90 autoantigen homolog</fullName>
    </alternativeName>
</protein>
<evidence type="ECO:0000250" key="1">
    <source>
        <dbReference type="UniProtKB" id="Q8TCG1"/>
    </source>
</evidence>
<evidence type="ECO:0000255" key="2"/>
<evidence type="ECO:0000269" key="3">
    <source>
    </source>
</evidence>
<evidence type="ECO:0000269" key="4">
    <source>
    </source>
</evidence>
<evidence type="ECO:0000303" key="5">
    <source>
    </source>
</evidence>
<evidence type="ECO:0000305" key="6"/>
<organism>
    <name type="scientific">Mus musculus</name>
    <name type="common">Mouse</name>
    <dbReference type="NCBI Taxonomy" id="10090"/>
    <lineage>
        <taxon>Eukaryota</taxon>
        <taxon>Metazoa</taxon>
        <taxon>Chordata</taxon>
        <taxon>Craniata</taxon>
        <taxon>Vertebrata</taxon>
        <taxon>Euteleostomi</taxon>
        <taxon>Mammalia</taxon>
        <taxon>Eutheria</taxon>
        <taxon>Euarchontoglires</taxon>
        <taxon>Glires</taxon>
        <taxon>Rodentia</taxon>
        <taxon>Myomorpha</taxon>
        <taxon>Muroidea</taxon>
        <taxon>Muridae</taxon>
        <taxon>Murinae</taxon>
        <taxon>Mus</taxon>
        <taxon>Mus</taxon>
    </lineage>
</organism>
<sequence>MDSTACLKSLLLSISQYKAVKSEANATQLLRHLEVVSGQKLTRLFTSHQILPSECLSCLVELLEDPNISASLILSIISLLSQLAIDNETRDCLQNIYNLNSVLSGVVCRSSACHNDSVFLQCIQLLQRLTYNAKFFHSGAHIDDLITFLIGHVQSSEDELTMPCLGLLANLCRHNLSVQTQIKTLSNVKSFYRTLISFLAHSSLTVVVFALSILSSLTLNEEVGEKLFHARNIHQTFQLIFNILINGDGTLTRKYSVDLLMDLLKNPKIADYLTRYEHFSSCLSQVLGLLNAKDPDSSSKVLELLLAFCAVTQLRHVLSQMMFEQSPSGNILGSRPKSLEPTAALLRWLSQPLDGAENCSVLALELFKEIFEDVIDTGNCSSTDHFVTLLLPTILDQLQFKEQNLDETLVRNKCERMVKAIEVLLTLCGDDSLKMHVVKILTTLKCTTLIEQQFTYGKIDLGFGTKVADSELCKLAADVILKTLTLMNKLKQLVPGMEVSFYKILQDPRLITPLAFALTSDNREQVQSGLGILLEASPLPDFPAFVLGESIAANNVYRQQETEHLPRKMTFQPLNHGFSTSAKCLTPPPSKDNAPALNIEDLIEKLQAGVMVKDQISDIRISDIMDVYEMKLSTLASKESRLQDLLEAKALALAQADRLIAQYRCQRTQAETEARTLAGMLREVERKNEELSVLLKSQQLESERAQNDIEHLFQHSKKLESVAAEHEILTKSYMELVQRNEATEKKNTDLQTTCESLNKHIETMKKLNEALKQQNEKTIAQLIEKEEQRKEVQSQLADRECKLSNLHKIAKSQEEKLNVLQKEKEDKQETIDILRKELSRTEQIRKELSIKASSLEMHKAQLEGRLEEKESLLKLQQEELNKHSHMIAMIHSLSGGKISPETVNLSI</sequence>
<gene>
    <name type="primary">Cip2a</name>
    <name evidence="5" type="synonym">Kiaa1524</name>
</gene>
<dbReference type="EMBL" id="AK049356">
    <property type="protein sequence ID" value="BAC33705.1"/>
    <property type="status" value="ALT_INIT"/>
    <property type="molecule type" value="mRNA"/>
</dbReference>
<dbReference type="EMBL" id="BC137719">
    <property type="protein sequence ID" value="AAI37720.1"/>
    <property type="molecule type" value="mRNA"/>
</dbReference>
<dbReference type="EMBL" id="BC052662">
    <property type="protein sequence ID" value="AAH52662.1"/>
    <property type="molecule type" value="mRNA"/>
</dbReference>
<dbReference type="EMBL" id="AK173190">
    <property type="protein sequence ID" value="BAD32468.1"/>
    <property type="molecule type" value="mRNA"/>
</dbReference>
<dbReference type="CCDS" id="CCDS49867.1"/>
<dbReference type="RefSeq" id="NP_766204.2">
    <property type="nucleotide sequence ID" value="NM_172616.2"/>
</dbReference>
<dbReference type="SMR" id="Q8BWY9"/>
<dbReference type="BioGRID" id="230256">
    <property type="interactions" value="2"/>
</dbReference>
<dbReference type="FunCoup" id="Q8BWY9">
    <property type="interactions" value="2202"/>
</dbReference>
<dbReference type="IntAct" id="Q8BWY9">
    <property type="interactions" value="1"/>
</dbReference>
<dbReference type="STRING" id="10090.ENSMUSP00000044714"/>
<dbReference type="iPTMnet" id="Q8BWY9"/>
<dbReference type="PhosphoSitePlus" id="Q8BWY9"/>
<dbReference type="jPOST" id="Q8BWY9"/>
<dbReference type="PaxDb" id="10090-ENSMUSP00000113075"/>
<dbReference type="ProteomicsDB" id="281471"/>
<dbReference type="Pumba" id="Q8BWY9"/>
<dbReference type="Antibodypedia" id="32380">
    <property type="antibodies" value="278 antibodies from 24 providers"/>
</dbReference>
<dbReference type="DNASU" id="224171"/>
<dbReference type="Ensembl" id="ENSMUST00000048374.6">
    <property type="protein sequence ID" value="ENSMUSP00000044714.6"/>
    <property type="gene ID" value="ENSMUSG00000033031.14"/>
</dbReference>
<dbReference type="GeneID" id="224171"/>
<dbReference type="KEGG" id="mmu:224171"/>
<dbReference type="UCSC" id="uc007zkb.1">
    <property type="organism name" value="mouse"/>
</dbReference>
<dbReference type="AGR" id="MGI:2146335"/>
<dbReference type="CTD" id="57650"/>
<dbReference type="MGI" id="MGI:2146335">
    <property type="gene designation" value="Cip2a"/>
</dbReference>
<dbReference type="VEuPathDB" id="HostDB:ENSMUSG00000033031"/>
<dbReference type="eggNOG" id="ENOG502QTAP">
    <property type="taxonomic scope" value="Eukaryota"/>
</dbReference>
<dbReference type="GeneTree" id="ENSGT00940000153251"/>
<dbReference type="HOGENOM" id="CLU_014754_0_0_1"/>
<dbReference type="InParanoid" id="Q8BWY9"/>
<dbReference type="OMA" id="HHVQSTE"/>
<dbReference type="OrthoDB" id="60343at9989"/>
<dbReference type="BioGRID-ORCS" id="224171">
    <property type="hits" value="16 hits in 82 CRISPR screens"/>
</dbReference>
<dbReference type="ChiTaRS" id="Cip2a">
    <property type="organism name" value="mouse"/>
</dbReference>
<dbReference type="PRO" id="PR:Q8BWY9"/>
<dbReference type="Proteomes" id="UP000000589">
    <property type="component" value="Chromosome 16"/>
</dbReference>
<dbReference type="RNAct" id="Q8BWY9">
    <property type="molecule type" value="protein"/>
</dbReference>
<dbReference type="Bgee" id="ENSMUSG00000033031">
    <property type="expression patterns" value="Expressed in pharyngeal arch 2 and 188 other cell types or tissues"/>
</dbReference>
<dbReference type="ExpressionAtlas" id="Q8BWY9">
    <property type="expression patterns" value="baseline and differential"/>
</dbReference>
<dbReference type="GO" id="GO:0005694">
    <property type="term" value="C:chromosome"/>
    <property type="evidence" value="ECO:0000250"/>
    <property type="project" value="UniProtKB"/>
</dbReference>
<dbReference type="GO" id="GO:0005737">
    <property type="term" value="C:cytoplasm"/>
    <property type="evidence" value="ECO:0007669"/>
    <property type="project" value="UniProtKB-SubCell"/>
</dbReference>
<dbReference type="GO" id="GO:0042803">
    <property type="term" value="F:protein homodimerization activity"/>
    <property type="evidence" value="ECO:0000250"/>
    <property type="project" value="UniProtKB"/>
</dbReference>
<dbReference type="GO" id="GO:0004864">
    <property type="term" value="F:protein phosphatase inhibitor activity"/>
    <property type="evidence" value="ECO:0000250"/>
    <property type="project" value="UniProtKB"/>
</dbReference>
<dbReference type="GO" id="GO:0051276">
    <property type="term" value="P:chromosome organization"/>
    <property type="evidence" value="ECO:0000250"/>
    <property type="project" value="UniProtKB"/>
</dbReference>
<dbReference type="GO" id="GO:0006974">
    <property type="term" value="P:DNA damage response"/>
    <property type="evidence" value="ECO:0000250"/>
    <property type="project" value="UniProtKB"/>
</dbReference>
<dbReference type="GO" id="GO:0061351">
    <property type="term" value="P:neural precursor cell proliferation"/>
    <property type="evidence" value="ECO:0000315"/>
    <property type="project" value="MGI"/>
</dbReference>
<dbReference type="GO" id="GO:0007405">
    <property type="term" value="P:neuroblast proliferation"/>
    <property type="evidence" value="ECO:0000315"/>
    <property type="project" value="MGI"/>
</dbReference>
<dbReference type="GO" id="GO:0002052">
    <property type="term" value="P:positive regulation of neuroblast proliferation"/>
    <property type="evidence" value="ECO:0000315"/>
    <property type="project" value="MGI"/>
</dbReference>
<dbReference type="GO" id="GO:0007283">
    <property type="term" value="P:spermatogenesis"/>
    <property type="evidence" value="ECO:0000315"/>
    <property type="project" value="MGI"/>
</dbReference>
<dbReference type="FunFam" id="1.25.10.10:FF:000822">
    <property type="entry name" value="protein CIP2A isoform X2"/>
    <property type="match status" value="1"/>
</dbReference>
<dbReference type="Gene3D" id="1.25.10.10">
    <property type="entry name" value="Leucine-rich Repeat Variant"/>
    <property type="match status" value="1"/>
</dbReference>
<dbReference type="InterPro" id="IPR011989">
    <property type="entry name" value="ARM-like"/>
</dbReference>
<dbReference type="InterPro" id="IPR016024">
    <property type="entry name" value="ARM-type_fold"/>
</dbReference>
<dbReference type="InterPro" id="IPR042510">
    <property type="entry name" value="CIP2A"/>
</dbReference>
<dbReference type="InterPro" id="IPR048701">
    <property type="entry name" value="CIP2A_N"/>
</dbReference>
<dbReference type="PANTHER" id="PTHR23161">
    <property type="entry name" value="PROTEIN CIP2A"/>
    <property type="match status" value="1"/>
</dbReference>
<dbReference type="PANTHER" id="PTHR23161:SF2">
    <property type="entry name" value="PROTEIN CIP2A"/>
    <property type="match status" value="1"/>
</dbReference>
<dbReference type="Pfam" id="PF21044">
    <property type="entry name" value="CIP2A_N"/>
    <property type="match status" value="1"/>
</dbReference>
<dbReference type="SUPFAM" id="SSF48371">
    <property type="entry name" value="ARM repeat"/>
    <property type="match status" value="1"/>
</dbReference>
<proteinExistence type="evidence at protein level"/>
<reference key="1">
    <citation type="journal article" date="2005" name="Science">
        <title>The transcriptional landscape of the mammalian genome.</title>
        <authorList>
            <person name="Carninci P."/>
            <person name="Kasukawa T."/>
            <person name="Katayama S."/>
            <person name="Gough J."/>
            <person name="Frith M.C."/>
            <person name="Maeda N."/>
            <person name="Oyama R."/>
            <person name="Ravasi T."/>
            <person name="Lenhard B."/>
            <person name="Wells C."/>
            <person name="Kodzius R."/>
            <person name="Shimokawa K."/>
            <person name="Bajic V.B."/>
            <person name="Brenner S.E."/>
            <person name="Batalov S."/>
            <person name="Forrest A.R."/>
            <person name="Zavolan M."/>
            <person name="Davis M.J."/>
            <person name="Wilming L.G."/>
            <person name="Aidinis V."/>
            <person name="Allen J.E."/>
            <person name="Ambesi-Impiombato A."/>
            <person name="Apweiler R."/>
            <person name="Aturaliya R.N."/>
            <person name="Bailey T.L."/>
            <person name="Bansal M."/>
            <person name="Baxter L."/>
            <person name="Beisel K.W."/>
            <person name="Bersano T."/>
            <person name="Bono H."/>
            <person name="Chalk A.M."/>
            <person name="Chiu K.P."/>
            <person name="Choudhary V."/>
            <person name="Christoffels A."/>
            <person name="Clutterbuck D.R."/>
            <person name="Crowe M.L."/>
            <person name="Dalla E."/>
            <person name="Dalrymple B.P."/>
            <person name="de Bono B."/>
            <person name="Della Gatta G."/>
            <person name="di Bernardo D."/>
            <person name="Down T."/>
            <person name="Engstrom P."/>
            <person name="Fagiolini M."/>
            <person name="Faulkner G."/>
            <person name="Fletcher C.F."/>
            <person name="Fukushima T."/>
            <person name="Furuno M."/>
            <person name="Futaki S."/>
            <person name="Gariboldi M."/>
            <person name="Georgii-Hemming P."/>
            <person name="Gingeras T.R."/>
            <person name="Gojobori T."/>
            <person name="Green R.E."/>
            <person name="Gustincich S."/>
            <person name="Harbers M."/>
            <person name="Hayashi Y."/>
            <person name="Hensch T.K."/>
            <person name="Hirokawa N."/>
            <person name="Hill D."/>
            <person name="Huminiecki L."/>
            <person name="Iacono M."/>
            <person name="Ikeo K."/>
            <person name="Iwama A."/>
            <person name="Ishikawa T."/>
            <person name="Jakt M."/>
            <person name="Kanapin A."/>
            <person name="Katoh M."/>
            <person name="Kawasawa Y."/>
            <person name="Kelso J."/>
            <person name="Kitamura H."/>
            <person name="Kitano H."/>
            <person name="Kollias G."/>
            <person name="Krishnan S.P."/>
            <person name="Kruger A."/>
            <person name="Kummerfeld S.K."/>
            <person name="Kurochkin I.V."/>
            <person name="Lareau L.F."/>
            <person name="Lazarevic D."/>
            <person name="Lipovich L."/>
            <person name="Liu J."/>
            <person name="Liuni S."/>
            <person name="McWilliam S."/>
            <person name="Madan Babu M."/>
            <person name="Madera M."/>
            <person name="Marchionni L."/>
            <person name="Matsuda H."/>
            <person name="Matsuzawa S."/>
            <person name="Miki H."/>
            <person name="Mignone F."/>
            <person name="Miyake S."/>
            <person name="Morris K."/>
            <person name="Mottagui-Tabar S."/>
            <person name="Mulder N."/>
            <person name="Nakano N."/>
            <person name="Nakauchi H."/>
            <person name="Ng P."/>
            <person name="Nilsson R."/>
            <person name="Nishiguchi S."/>
            <person name="Nishikawa S."/>
            <person name="Nori F."/>
            <person name="Ohara O."/>
            <person name="Okazaki Y."/>
            <person name="Orlando V."/>
            <person name="Pang K.C."/>
            <person name="Pavan W.J."/>
            <person name="Pavesi G."/>
            <person name="Pesole G."/>
            <person name="Petrovsky N."/>
            <person name="Piazza S."/>
            <person name="Reed J."/>
            <person name="Reid J.F."/>
            <person name="Ring B.Z."/>
            <person name="Ringwald M."/>
            <person name="Rost B."/>
            <person name="Ruan Y."/>
            <person name="Salzberg S.L."/>
            <person name="Sandelin A."/>
            <person name="Schneider C."/>
            <person name="Schoenbach C."/>
            <person name="Sekiguchi K."/>
            <person name="Semple C.A."/>
            <person name="Seno S."/>
            <person name="Sessa L."/>
            <person name="Sheng Y."/>
            <person name="Shibata Y."/>
            <person name="Shimada H."/>
            <person name="Shimada K."/>
            <person name="Silva D."/>
            <person name="Sinclair B."/>
            <person name="Sperling S."/>
            <person name="Stupka E."/>
            <person name="Sugiura K."/>
            <person name="Sultana R."/>
            <person name="Takenaka Y."/>
            <person name="Taki K."/>
            <person name="Tammoja K."/>
            <person name="Tan S.L."/>
            <person name="Tang S."/>
            <person name="Taylor M.S."/>
            <person name="Tegner J."/>
            <person name="Teichmann S.A."/>
            <person name="Ueda H.R."/>
            <person name="van Nimwegen E."/>
            <person name="Verardo R."/>
            <person name="Wei C.L."/>
            <person name="Yagi K."/>
            <person name="Yamanishi H."/>
            <person name="Zabarovsky E."/>
            <person name="Zhu S."/>
            <person name="Zimmer A."/>
            <person name="Hide W."/>
            <person name="Bult C."/>
            <person name="Grimmond S.M."/>
            <person name="Teasdale R.D."/>
            <person name="Liu E.T."/>
            <person name="Brusic V."/>
            <person name="Quackenbush J."/>
            <person name="Wahlestedt C."/>
            <person name="Mattick J.S."/>
            <person name="Hume D.A."/>
            <person name="Kai C."/>
            <person name="Sasaki D."/>
            <person name="Tomaru Y."/>
            <person name="Fukuda S."/>
            <person name="Kanamori-Katayama M."/>
            <person name="Suzuki M."/>
            <person name="Aoki J."/>
            <person name="Arakawa T."/>
            <person name="Iida J."/>
            <person name="Imamura K."/>
            <person name="Itoh M."/>
            <person name="Kato T."/>
            <person name="Kawaji H."/>
            <person name="Kawagashira N."/>
            <person name="Kawashima T."/>
            <person name="Kojima M."/>
            <person name="Kondo S."/>
            <person name="Konno H."/>
            <person name="Nakano K."/>
            <person name="Ninomiya N."/>
            <person name="Nishio T."/>
            <person name="Okada M."/>
            <person name="Plessy C."/>
            <person name="Shibata K."/>
            <person name="Shiraki T."/>
            <person name="Suzuki S."/>
            <person name="Tagami M."/>
            <person name="Waki K."/>
            <person name="Watahiki A."/>
            <person name="Okamura-Oho Y."/>
            <person name="Suzuki H."/>
            <person name="Kawai J."/>
            <person name="Hayashizaki Y."/>
        </authorList>
    </citation>
    <scope>NUCLEOTIDE SEQUENCE [LARGE SCALE MRNA]</scope>
    <source>
        <strain>C57BL/6J</strain>
    </source>
</reference>
<reference key="2">
    <citation type="journal article" date="2004" name="Genome Res.">
        <title>The status, quality, and expansion of the NIH full-length cDNA project: the Mammalian Gene Collection (MGC).</title>
        <authorList>
            <consortium name="The MGC Project Team"/>
        </authorList>
    </citation>
    <scope>NUCLEOTIDE SEQUENCE [LARGE SCALE MRNA]</scope>
    <source>
        <strain>C57BL/6J</strain>
        <tissue>Egg</tissue>
        <tissue>Thymus</tissue>
    </source>
</reference>
<reference key="3">
    <citation type="journal article" date="2004" name="DNA Res.">
        <title>Prediction of the coding sequences of mouse homologues of KIAA gene: IV. The complete nucleotide sequences of 500 mouse KIAA-homologous cDNAs identified by screening of terminal sequences of cDNA clones randomly sampled from size-fractionated libraries.</title>
        <authorList>
            <person name="Okazaki N."/>
            <person name="Kikuno R."/>
            <person name="Ohara R."/>
            <person name="Inamoto S."/>
            <person name="Koseki H."/>
            <person name="Hiraoka S."/>
            <person name="Saga Y."/>
            <person name="Seino S."/>
            <person name="Nishimura M."/>
            <person name="Kaisho T."/>
            <person name="Hoshino K."/>
            <person name="Kitamura H."/>
            <person name="Nagase T."/>
            <person name="Ohara O."/>
            <person name="Koga H."/>
        </authorList>
    </citation>
    <scope>NUCLEOTIDE SEQUENCE [LARGE SCALE MRNA] OF 59-907</scope>
    <source>
        <tissue>Embryonic tail</tissue>
    </source>
</reference>
<reference key="4">
    <citation type="journal article" date="2002" name="Oncogene">
        <title>Cloning and characterization of a novel 90 kDa 'companion' auto-antigen of p62 overexpressed in cancer.</title>
        <authorList>
            <person name="Soo Hoo L."/>
            <person name="Zhang J.Y."/>
            <person name="Chan E.K.L."/>
        </authorList>
    </citation>
    <scope>TISSUE SPECIFICITY</scope>
</reference>
<reference key="5">
    <citation type="journal article" date="2010" name="Cell">
        <title>A tissue-specific atlas of mouse protein phosphorylation and expression.</title>
        <authorList>
            <person name="Huttlin E.L."/>
            <person name="Jedrychowski M.P."/>
            <person name="Elias J.E."/>
            <person name="Goswami T."/>
            <person name="Rad R."/>
            <person name="Beausoleil S.A."/>
            <person name="Villen J."/>
            <person name="Haas W."/>
            <person name="Sowa M.E."/>
            <person name="Gygi S.P."/>
        </authorList>
    </citation>
    <scope>IDENTIFICATION BY MASS SPECTROMETRY [LARGE SCALE ANALYSIS]</scope>
    <source>
        <tissue>Spleen</tissue>
        <tissue>Testis</tissue>
    </source>
</reference>
<reference key="6">
    <citation type="journal article" date="2012" name="PLoS ONE">
        <title>CIP2A promotes proliferation of spermatogonial progenitor cells and spermatogenesis in mice.</title>
        <authorList>
            <person name="Ventelae S."/>
            <person name="Come C."/>
            <person name="Maekelae J.A."/>
            <person name="Hobbs R.M."/>
            <person name="Mannermaa L."/>
            <person name="Kallajoki M."/>
            <person name="Chan E.K."/>
            <person name="Pandolfi P.P."/>
            <person name="Toppari J."/>
            <person name="Westermarck J."/>
        </authorList>
    </citation>
    <scope>DISRUPTION PHENOTYPE</scope>
</reference>
<name>CIP2A_MOUSE</name>
<comment type="function">
    <text evidence="1">Acts as an inhibitor of protein phosphatase PP2A (By similarity). Promotes anchorage-independent cell growth and tumor formation by preventing dephosphorylation of MYC, thereby stabilizing MYC in human malignancies (By similarity). Together with TOPBP1, plays an essential role in the response to genome instability generated by the presence of acentric chromosome fragments derived from shattered chromosomes within micronuclei (By similarity). Micronuclei, which are frequently found in cancer cells, consist of chromatin surrounded by their own nuclear membrane: following breakdown of the micronuclear envelope, a process associated with chromothripsis, the CIP2A-TOPBP1 complex tethers chromosome fragments during mitosis to ensure clustered segregation of the fragments to a single daughter cell nucleus, facilitating re-ligation with limited chromosome scattering and loss (By similarity).</text>
</comment>
<comment type="subunit">
    <text evidence="1">Homodimer. Interacts with MYC. Interacts with PPP2R5C; this interaction stabilizes CIP2A. Interacts with PPP2R1A; this interaction stabilizes CIP2A. Interacts with TOPBP1; forming the CIP2A-TOPBP1 complex.</text>
</comment>
<comment type="subcellular location">
    <subcellularLocation>
        <location evidence="1">Cytoplasm</location>
    </subcellularLocation>
    <subcellularLocation>
        <location evidence="1">Chromosome</location>
    </subcellularLocation>
    <text evidence="1">Predominantly localizes within the cytoplasm. Localizes to broken chromosomes within micronuclei during interphase and following chromothripsis. Localization to broken chromosomes is mainly independent of MDC1.</text>
</comment>
<comment type="tissue specificity">
    <text evidence="3">Highly expressed in 17.5 and 18.5 dpc liver but not expressed in adult liver. Expressed at moderate level in embryonic brain, muscle and epidermal layers.</text>
</comment>
<comment type="disruption phenotype">
    <text evidence="4">Mice develop normally and do not display any abnormality with the exception of a mild spermatogenesis defect.</text>
</comment>
<comment type="similarity">
    <text evidence="6">Belongs to the CIP2A family.</text>
</comment>
<comment type="sequence caution" evidence="6">
    <conflict type="erroneous initiation">
        <sequence resource="EMBL-CDS" id="BAC33705"/>
    </conflict>
    <text>Extended N-terminus.</text>
</comment>